<comment type="catalytic activity">
    <reaction evidence="1">
        <text>CMP + ATP = CDP + ADP</text>
        <dbReference type="Rhea" id="RHEA:11600"/>
        <dbReference type="ChEBI" id="CHEBI:30616"/>
        <dbReference type="ChEBI" id="CHEBI:58069"/>
        <dbReference type="ChEBI" id="CHEBI:60377"/>
        <dbReference type="ChEBI" id="CHEBI:456216"/>
        <dbReference type="EC" id="2.7.4.25"/>
    </reaction>
</comment>
<comment type="catalytic activity">
    <reaction evidence="1">
        <text>dCMP + ATP = dCDP + ADP</text>
        <dbReference type="Rhea" id="RHEA:25094"/>
        <dbReference type="ChEBI" id="CHEBI:30616"/>
        <dbReference type="ChEBI" id="CHEBI:57566"/>
        <dbReference type="ChEBI" id="CHEBI:58593"/>
        <dbReference type="ChEBI" id="CHEBI:456216"/>
        <dbReference type="EC" id="2.7.4.25"/>
    </reaction>
</comment>
<comment type="subcellular location">
    <subcellularLocation>
        <location evidence="1">Cytoplasm</location>
    </subcellularLocation>
</comment>
<comment type="similarity">
    <text evidence="1">Belongs to the cytidylate kinase family. Type 2 subfamily.</text>
</comment>
<proteinExistence type="inferred from homology"/>
<evidence type="ECO:0000255" key="1">
    <source>
        <dbReference type="HAMAP-Rule" id="MF_00239"/>
    </source>
</evidence>
<reference key="1">
    <citation type="submission" date="2008-03" db="EMBL/GenBank/DDBJ databases">
        <title>Complete sequence of Thermoproteus neutrophilus V24Sta.</title>
        <authorList>
            <consortium name="US DOE Joint Genome Institute"/>
            <person name="Copeland A."/>
            <person name="Lucas S."/>
            <person name="Lapidus A."/>
            <person name="Glavina del Rio T."/>
            <person name="Dalin E."/>
            <person name="Tice H."/>
            <person name="Bruce D."/>
            <person name="Goodwin L."/>
            <person name="Pitluck S."/>
            <person name="Sims D."/>
            <person name="Brettin T."/>
            <person name="Detter J.C."/>
            <person name="Han C."/>
            <person name="Kuske C.R."/>
            <person name="Schmutz J."/>
            <person name="Larimer F."/>
            <person name="Land M."/>
            <person name="Hauser L."/>
            <person name="Kyrpides N."/>
            <person name="Mikhailova N."/>
            <person name="Biddle J.F."/>
            <person name="Zhang Z."/>
            <person name="Fitz-Gibbon S.T."/>
            <person name="Lowe T.M."/>
            <person name="Saltikov C."/>
            <person name="House C.H."/>
            <person name="Richardson P."/>
        </authorList>
    </citation>
    <scope>NUCLEOTIDE SEQUENCE [LARGE SCALE GENOMIC DNA]</scope>
    <source>
        <strain>DSM 2338 / JCM 9278 / NBRC 100436 / V24Sta</strain>
    </source>
</reference>
<dbReference type="EC" id="2.7.4.25" evidence="1"/>
<dbReference type="EMBL" id="CP001014">
    <property type="protein sequence ID" value="ACB40647.1"/>
    <property type="molecule type" value="Genomic_DNA"/>
</dbReference>
<dbReference type="RefSeq" id="WP_012351066.1">
    <property type="nucleotide sequence ID" value="NC_010525.1"/>
</dbReference>
<dbReference type="SMR" id="B1YAJ8"/>
<dbReference type="STRING" id="444157.Tneu_1729"/>
<dbReference type="GeneID" id="6165088"/>
<dbReference type="KEGG" id="tne:Tneu_1729"/>
<dbReference type="eggNOG" id="arCOG01037">
    <property type="taxonomic scope" value="Archaea"/>
</dbReference>
<dbReference type="HOGENOM" id="CLU_079959_1_0_2"/>
<dbReference type="OrthoDB" id="31096at2157"/>
<dbReference type="Proteomes" id="UP000001694">
    <property type="component" value="Chromosome"/>
</dbReference>
<dbReference type="GO" id="GO:0005737">
    <property type="term" value="C:cytoplasm"/>
    <property type="evidence" value="ECO:0007669"/>
    <property type="project" value="UniProtKB-SubCell"/>
</dbReference>
<dbReference type="GO" id="GO:0005524">
    <property type="term" value="F:ATP binding"/>
    <property type="evidence" value="ECO:0007669"/>
    <property type="project" value="UniProtKB-UniRule"/>
</dbReference>
<dbReference type="GO" id="GO:0036430">
    <property type="term" value="F:CMP kinase activity"/>
    <property type="evidence" value="ECO:0007669"/>
    <property type="project" value="RHEA"/>
</dbReference>
<dbReference type="GO" id="GO:0036431">
    <property type="term" value="F:dCMP kinase activity"/>
    <property type="evidence" value="ECO:0007669"/>
    <property type="project" value="RHEA"/>
</dbReference>
<dbReference type="GO" id="GO:0006220">
    <property type="term" value="P:pyrimidine nucleotide metabolic process"/>
    <property type="evidence" value="ECO:0007669"/>
    <property type="project" value="UniProtKB-UniRule"/>
</dbReference>
<dbReference type="CDD" id="cd02020">
    <property type="entry name" value="CMPK"/>
    <property type="match status" value="1"/>
</dbReference>
<dbReference type="Gene3D" id="3.40.50.300">
    <property type="entry name" value="P-loop containing nucleotide triphosphate hydrolases"/>
    <property type="match status" value="1"/>
</dbReference>
<dbReference type="HAMAP" id="MF_00239">
    <property type="entry name" value="Cytidyl_kinase_type2"/>
    <property type="match status" value="1"/>
</dbReference>
<dbReference type="InterPro" id="IPR011892">
    <property type="entry name" value="Cyt_kin_arch"/>
</dbReference>
<dbReference type="InterPro" id="IPR011994">
    <property type="entry name" value="Cytidylate_kinase_dom"/>
</dbReference>
<dbReference type="InterPro" id="IPR027417">
    <property type="entry name" value="P-loop_NTPase"/>
</dbReference>
<dbReference type="NCBIfam" id="TIGR02173">
    <property type="entry name" value="cyt_kin_arch"/>
    <property type="match status" value="1"/>
</dbReference>
<dbReference type="Pfam" id="PF13189">
    <property type="entry name" value="Cytidylate_kin2"/>
    <property type="match status" value="1"/>
</dbReference>
<dbReference type="SUPFAM" id="SSF52540">
    <property type="entry name" value="P-loop containing nucleoside triphosphate hydrolases"/>
    <property type="match status" value="1"/>
</dbReference>
<sequence>MVVVAVSGQPGSGKTTIAREVARVLKVPLVSSGTIFRELAAKMGMDLVEFHRYAETNPEIDKMIDALTAEKAKAGDVVVEGHLAAWVARPYADVCIYLKASSEVRAKRVSIRDKKSFEEALREVREREELNRKRYLSLYGIDIHNLTIFDLVLDTSYLSINDAVRISLDYICTTLEIKYSKKIC</sequence>
<organism>
    <name type="scientific">Pyrobaculum neutrophilum (strain DSM 2338 / JCM 9278 / NBRC 100436 / V24Sta)</name>
    <name type="common">Thermoproteus neutrophilus</name>
    <dbReference type="NCBI Taxonomy" id="444157"/>
    <lineage>
        <taxon>Archaea</taxon>
        <taxon>Thermoproteota</taxon>
        <taxon>Thermoprotei</taxon>
        <taxon>Thermoproteales</taxon>
        <taxon>Thermoproteaceae</taxon>
        <taxon>Pyrobaculum</taxon>
    </lineage>
</organism>
<feature type="chain" id="PRO_1000100710" description="Cytidylate kinase">
    <location>
        <begin position="1"/>
        <end position="184"/>
    </location>
</feature>
<feature type="binding site" evidence="1">
    <location>
        <begin position="8"/>
        <end position="16"/>
    </location>
    <ligand>
        <name>ATP</name>
        <dbReference type="ChEBI" id="CHEBI:30616"/>
    </ligand>
</feature>
<protein>
    <recommendedName>
        <fullName evidence="1">Cytidylate kinase</fullName>
        <shortName evidence="1">CK</shortName>
        <ecNumber evidence="1">2.7.4.25</ecNumber>
    </recommendedName>
    <alternativeName>
        <fullName evidence="1">Cytidine monophosphate kinase</fullName>
        <shortName evidence="1">CMP kinase</shortName>
    </alternativeName>
</protein>
<accession>B1YAJ8</accession>
<gene>
    <name evidence="1" type="primary">cmk</name>
    <name type="ordered locus">Tneu_1729</name>
</gene>
<keyword id="KW-0067">ATP-binding</keyword>
<keyword id="KW-0963">Cytoplasm</keyword>
<keyword id="KW-0418">Kinase</keyword>
<keyword id="KW-0547">Nucleotide-binding</keyword>
<keyword id="KW-0808">Transferase</keyword>
<name>KCY_PYRNV</name>